<name>STC4_RHIME</name>
<keyword id="KW-0001">2Fe-2S</keyword>
<keyword id="KW-0274">FAD</keyword>
<keyword id="KW-0285">Flavoprotein</keyword>
<keyword id="KW-0408">Iron</keyword>
<keyword id="KW-0411">Iron-sulfur</keyword>
<keyword id="KW-0479">Metal-binding</keyword>
<keyword id="KW-0560">Oxidoreductase</keyword>
<keyword id="KW-0614">Plasmid</keyword>
<keyword id="KW-1185">Reference proteome</keyword>
<comment type="function">
    <text evidence="4 5 8 9">Reductase involved in the catabolism of stachydrine (L-proline betaine), a source of carbon and nitrogen (PubMed:10689197). Part of a Rieske-type oxygenase system that catalyzes the demethylation of stachydrine to produce N-methyl-L-proline (monomethylproline) (PubMed:22224443). This subunit is probably involved in the transfer of electrons from NAD(P)H to the catalytic subunit Stc2 (Probable).</text>
</comment>
<comment type="cofactor">
    <cofactor evidence="1">
        <name>FAD</name>
        <dbReference type="ChEBI" id="CHEBI:57692"/>
    </cofactor>
    <text evidence="1">Binds 1 FAD per subunit.</text>
</comment>
<comment type="cofactor">
    <cofactor evidence="2">
        <name>[2Fe-2S] cluster</name>
        <dbReference type="ChEBI" id="CHEBI:190135"/>
    </cofactor>
    <text evidence="2">Binds 1 2Fe-2S cluster.</text>
</comment>
<comment type="subunit">
    <text evidence="8 9">The system is probably composed of an oxygenase subunit (Stc2) and two reductase subunits (Stc3 and Stc4).</text>
</comment>
<comment type="disruption phenotype">
    <text evidence="4">In strain Sm2011, the insertion mutant cannot grow on stachydrine but it can grow on N-methyl proline.</text>
</comment>
<comment type="similarity">
    <text evidence="7">In the N-terminal section; belongs to the FAD-binding oxidoreductase type 6 family.</text>
</comment>
<protein>
    <recommendedName>
        <fullName evidence="7">Stachydrine N-demethylase reductase subunit Stc4</fullName>
        <ecNumber evidence="8 9">1.-.-.-</ecNumber>
    </recommendedName>
</protein>
<geneLocation type="plasmid">
    <name>pSymA</name>
    <name>megaplasmid 1</name>
</geneLocation>
<evidence type="ECO:0000250" key="1">
    <source>
        <dbReference type="UniProtKB" id="Q1QYU6"/>
    </source>
</evidence>
<evidence type="ECO:0000255" key="2">
    <source>
        <dbReference type="PROSITE-ProRule" id="PRU00465"/>
    </source>
</evidence>
<evidence type="ECO:0000255" key="3">
    <source>
        <dbReference type="PROSITE-ProRule" id="PRU00716"/>
    </source>
</evidence>
<evidence type="ECO:0000269" key="4">
    <source>
    </source>
</evidence>
<evidence type="ECO:0000269" key="5">
    <source>
    </source>
</evidence>
<evidence type="ECO:0000303" key="6">
    <source>
    </source>
</evidence>
<evidence type="ECO:0000305" key="7"/>
<evidence type="ECO:0000305" key="8">
    <source>
    </source>
</evidence>
<evidence type="ECO:0000305" key="9">
    <source>
    </source>
</evidence>
<evidence type="ECO:0000312" key="10">
    <source>
        <dbReference type="EMBL" id="AAK65059.1"/>
    </source>
</evidence>
<reference evidence="10" key="1">
    <citation type="journal article" date="2001" name="Proc. Natl. Acad. Sci. U.S.A.">
        <title>Nucleotide sequence and predicted functions of the entire Sinorhizobium meliloti pSymA megaplasmid.</title>
        <authorList>
            <person name="Barnett M.J."/>
            <person name="Fisher R.F."/>
            <person name="Jones T."/>
            <person name="Komp C."/>
            <person name="Abola A.P."/>
            <person name="Barloy-Hubler F."/>
            <person name="Bowser L."/>
            <person name="Capela D."/>
            <person name="Galibert F."/>
            <person name="Gouzy J."/>
            <person name="Gurjal M."/>
            <person name="Hong A."/>
            <person name="Huizar L."/>
            <person name="Hyman R.W."/>
            <person name="Kahn D."/>
            <person name="Kahn M.L."/>
            <person name="Kalman S."/>
            <person name="Keating D.H."/>
            <person name="Palm C."/>
            <person name="Peck M.C."/>
            <person name="Surzycki R."/>
            <person name="Wells D.H."/>
            <person name="Yeh K.-C."/>
            <person name="Davis R.W."/>
            <person name="Federspiel N.A."/>
            <person name="Long S.R."/>
        </authorList>
    </citation>
    <scope>NUCLEOTIDE SEQUENCE [LARGE SCALE GENOMIC DNA]</scope>
    <source>
        <strain>1021</strain>
    </source>
</reference>
<reference evidence="10" key="2">
    <citation type="journal article" date="2001" name="Science">
        <title>The composite genome of the legume symbiont Sinorhizobium meliloti.</title>
        <authorList>
            <person name="Galibert F."/>
            <person name="Finan T.M."/>
            <person name="Long S.R."/>
            <person name="Puehler A."/>
            <person name="Abola P."/>
            <person name="Ampe F."/>
            <person name="Barloy-Hubler F."/>
            <person name="Barnett M.J."/>
            <person name="Becker A."/>
            <person name="Boistard P."/>
            <person name="Bothe G."/>
            <person name="Boutry M."/>
            <person name="Bowser L."/>
            <person name="Buhrmester J."/>
            <person name="Cadieu E."/>
            <person name="Capela D."/>
            <person name="Chain P."/>
            <person name="Cowie A."/>
            <person name="Davis R.W."/>
            <person name="Dreano S."/>
            <person name="Federspiel N.A."/>
            <person name="Fisher R.F."/>
            <person name="Gloux S."/>
            <person name="Godrie T."/>
            <person name="Goffeau A."/>
            <person name="Golding B."/>
            <person name="Gouzy J."/>
            <person name="Gurjal M."/>
            <person name="Hernandez-Lucas I."/>
            <person name="Hong A."/>
            <person name="Huizar L."/>
            <person name="Hyman R.W."/>
            <person name="Jones T."/>
            <person name="Kahn D."/>
            <person name="Kahn M.L."/>
            <person name="Kalman S."/>
            <person name="Keating D.H."/>
            <person name="Kiss E."/>
            <person name="Komp C."/>
            <person name="Lelaure V."/>
            <person name="Masuy D."/>
            <person name="Palm C."/>
            <person name="Peck M.C."/>
            <person name="Pohl T.M."/>
            <person name="Portetelle D."/>
            <person name="Purnelle B."/>
            <person name="Ramsperger U."/>
            <person name="Surzycki R."/>
            <person name="Thebault P."/>
            <person name="Vandenbol M."/>
            <person name="Vorhoelter F.J."/>
            <person name="Weidner S."/>
            <person name="Wells D.H."/>
            <person name="Wong K."/>
            <person name="Yeh K.-C."/>
            <person name="Batut J."/>
        </authorList>
    </citation>
    <scope>NUCLEOTIDE SEQUENCE [LARGE SCALE GENOMIC DNA]</scope>
    <source>
        <strain>1021</strain>
    </source>
</reference>
<reference key="3">
    <citation type="journal article" date="2000" name="Gene">
        <title>The stachydrine catabolism region in Sinorhizobium meliloti encodes a multi-enzyme complex similar to the xenobiotic degrading systems in other bacteria.</title>
        <authorList>
            <person name="Burnet M.W."/>
            <person name="Goldmann A."/>
            <person name="Message B."/>
            <person name="Drong R."/>
            <person name="El Amrani A."/>
            <person name="Loreau O."/>
            <person name="Slightom J."/>
            <person name="Tepfer D."/>
        </authorList>
    </citation>
    <scope>FUNCTION</scope>
    <scope>DISRUPTION PHENOTYPE</scope>
    <source>
        <strain>Sm2011 / Rm2011 / 2011</strain>
    </source>
</reference>
<reference key="4">
    <citation type="journal article" date="2012" name="J. Am. Chem. Soc.">
        <title>Quaternary ammonium oxidative demethylation: X-ray crystallographic, resonance Raman, and UV-visible spectroscopic analysis of a Rieske-type demethylase.</title>
        <authorList>
            <person name="Daughtry K.D."/>
            <person name="Xiao Y."/>
            <person name="Stoner-Ma D."/>
            <person name="Cho E."/>
            <person name="Orville A.M."/>
            <person name="Liu P."/>
            <person name="Allen K.N."/>
        </authorList>
    </citation>
    <scope>FUNCTION</scope>
    <source>
        <strain>1021</strain>
    </source>
</reference>
<proteinExistence type="inferred from homology"/>
<dbReference type="EC" id="1.-.-.-" evidence="8 9"/>
<dbReference type="EMBL" id="AE006469">
    <property type="protein sequence ID" value="AAK65059.1"/>
    <property type="molecule type" value="Genomic_DNA"/>
</dbReference>
<dbReference type="PIR" id="A95312">
    <property type="entry name" value="A95312"/>
</dbReference>
<dbReference type="RefSeq" id="NP_435647.1">
    <property type="nucleotide sequence ID" value="NC_003037.1"/>
</dbReference>
<dbReference type="RefSeq" id="WP_010967391.1">
    <property type="nucleotide sequence ID" value="NC_003037.1"/>
</dbReference>
<dbReference type="EnsemblBacteria" id="AAK65059">
    <property type="protein sequence ID" value="AAK65059"/>
    <property type="gene ID" value="SMa0752"/>
</dbReference>
<dbReference type="KEGG" id="sme:SMa0752"/>
<dbReference type="PATRIC" id="fig|266834.11.peg.418"/>
<dbReference type="HOGENOM" id="CLU_003827_14_3_5"/>
<dbReference type="OrthoDB" id="9796486at2"/>
<dbReference type="BioCyc" id="MetaCyc:MONOMER-2721"/>
<dbReference type="Proteomes" id="UP000001976">
    <property type="component" value="Plasmid pSymA"/>
</dbReference>
<dbReference type="GO" id="GO:0051537">
    <property type="term" value="F:2 iron, 2 sulfur cluster binding"/>
    <property type="evidence" value="ECO:0007669"/>
    <property type="project" value="UniProtKB-KW"/>
</dbReference>
<dbReference type="GO" id="GO:0016491">
    <property type="term" value="F:oxidoreductase activity"/>
    <property type="evidence" value="ECO:0007669"/>
    <property type="project" value="InterPro"/>
</dbReference>
<dbReference type="CDD" id="cd00207">
    <property type="entry name" value="fer2"/>
    <property type="match status" value="1"/>
</dbReference>
<dbReference type="CDD" id="cd06215">
    <property type="entry name" value="FNR_iron_sulfur_binding_1"/>
    <property type="match status" value="1"/>
</dbReference>
<dbReference type="Gene3D" id="3.10.20.30">
    <property type="match status" value="1"/>
</dbReference>
<dbReference type="Gene3D" id="3.40.50.80">
    <property type="entry name" value="Nucleotide-binding domain of ferredoxin-NADP reductase (FNR) module"/>
    <property type="match status" value="1"/>
</dbReference>
<dbReference type="Gene3D" id="2.40.30.10">
    <property type="entry name" value="Translation factors"/>
    <property type="match status" value="1"/>
</dbReference>
<dbReference type="InterPro" id="IPR036010">
    <property type="entry name" value="2Fe-2S_ferredoxin-like_sf"/>
</dbReference>
<dbReference type="InterPro" id="IPR001041">
    <property type="entry name" value="2Fe-2S_ferredoxin-type"/>
</dbReference>
<dbReference type="InterPro" id="IPR006058">
    <property type="entry name" value="2Fe2S_fd_BS"/>
</dbReference>
<dbReference type="InterPro" id="IPR012675">
    <property type="entry name" value="Beta-grasp_dom_sf"/>
</dbReference>
<dbReference type="InterPro" id="IPR008333">
    <property type="entry name" value="Cbr1-like_FAD-bd_dom"/>
</dbReference>
<dbReference type="InterPro" id="IPR017927">
    <property type="entry name" value="FAD-bd_FR_type"/>
</dbReference>
<dbReference type="InterPro" id="IPR039261">
    <property type="entry name" value="FNR_nucleotide-bd"/>
</dbReference>
<dbReference type="InterPro" id="IPR050415">
    <property type="entry name" value="MRET"/>
</dbReference>
<dbReference type="InterPro" id="IPR001433">
    <property type="entry name" value="OxRdtase_FAD/NAD-bd"/>
</dbReference>
<dbReference type="InterPro" id="IPR017938">
    <property type="entry name" value="Riboflavin_synthase-like_b-brl"/>
</dbReference>
<dbReference type="PANTHER" id="PTHR47354">
    <property type="entry name" value="NADH OXIDOREDUCTASE HCR"/>
    <property type="match status" value="1"/>
</dbReference>
<dbReference type="PANTHER" id="PTHR47354:SF6">
    <property type="entry name" value="NADH OXIDOREDUCTASE HCR"/>
    <property type="match status" value="1"/>
</dbReference>
<dbReference type="Pfam" id="PF00970">
    <property type="entry name" value="FAD_binding_6"/>
    <property type="match status" value="1"/>
</dbReference>
<dbReference type="Pfam" id="PF00111">
    <property type="entry name" value="Fer2"/>
    <property type="match status" value="1"/>
</dbReference>
<dbReference type="Pfam" id="PF00175">
    <property type="entry name" value="NAD_binding_1"/>
    <property type="match status" value="1"/>
</dbReference>
<dbReference type="PRINTS" id="PR00410">
    <property type="entry name" value="PHEHYDRXLASE"/>
</dbReference>
<dbReference type="SUPFAM" id="SSF54292">
    <property type="entry name" value="2Fe-2S ferredoxin-like"/>
    <property type="match status" value="1"/>
</dbReference>
<dbReference type="SUPFAM" id="SSF52343">
    <property type="entry name" value="Ferredoxin reductase-like, C-terminal NADP-linked domain"/>
    <property type="match status" value="1"/>
</dbReference>
<dbReference type="SUPFAM" id="SSF63380">
    <property type="entry name" value="Riboflavin synthase domain-like"/>
    <property type="match status" value="1"/>
</dbReference>
<dbReference type="PROSITE" id="PS00197">
    <property type="entry name" value="2FE2S_FER_1"/>
    <property type="match status" value="1"/>
</dbReference>
<dbReference type="PROSITE" id="PS51085">
    <property type="entry name" value="2FE2S_FER_2"/>
    <property type="match status" value="1"/>
</dbReference>
<dbReference type="PROSITE" id="PS51384">
    <property type="entry name" value="FAD_FR"/>
    <property type="match status" value="1"/>
</dbReference>
<accession>Q92ZP8</accession>
<organism>
    <name type="scientific">Rhizobium meliloti (strain 1021)</name>
    <name type="common">Ensifer meliloti</name>
    <name type="synonym">Sinorhizobium meliloti</name>
    <dbReference type="NCBI Taxonomy" id="266834"/>
    <lineage>
        <taxon>Bacteria</taxon>
        <taxon>Pseudomonadati</taxon>
        <taxon>Pseudomonadota</taxon>
        <taxon>Alphaproteobacteria</taxon>
        <taxon>Hyphomicrobiales</taxon>
        <taxon>Rhizobiaceae</taxon>
        <taxon>Sinorhizobium/Ensifer group</taxon>
        <taxon>Sinorhizobium</taxon>
    </lineage>
</organism>
<sequence length="353" mass="38803">MTQFKQLSFWSDAEPLECVTRTPEAPNVVTFSFQSPSGALFNHDPGQFVTLELPAPGGPLYRTYTISSAPSRPTALTITVKAQDGSTGTRWMLDNLHKGMRIRAIGPAGKFSIVHHPADKYLFISAGSGITPMVAMTTWLYDSGREPDVVFINCARRPSEIILRDRMELMASRIVGIDLKWVVEEPDPFRSWTGYRGMFNQIMLGLMAQDYLEREVFCCGPEPFMRAVREALAGLGYDMSRYHQESFTAEPGHAEDVPEDVIPDEQNHAEIAFALSGVTTRCSETDTILAAAKAAGLVIPSGCSMGICGTCKVRKTEGQVHMVHNGGITDEDVEDGYILACCSKPLRRVSVEA</sequence>
<feature type="chain" id="PRO_0000462003" description="Stachydrine N-demethylase reductase subunit Stc4">
    <location>
        <begin position="1"/>
        <end position="353"/>
    </location>
</feature>
<feature type="domain" description="FAD-binding FR-type" evidence="3">
    <location>
        <begin position="11"/>
        <end position="114"/>
    </location>
</feature>
<feature type="domain" description="2Fe-2S ferredoxin-type" evidence="2">
    <location>
        <begin position="269"/>
        <end position="353"/>
    </location>
</feature>
<feature type="binding site" evidence="2">
    <location>
        <position position="303"/>
    </location>
    <ligand>
        <name>[2Fe-2S] cluster</name>
        <dbReference type="ChEBI" id="CHEBI:190135"/>
    </ligand>
</feature>
<feature type="binding site" evidence="2">
    <location>
        <position position="308"/>
    </location>
    <ligand>
        <name>[2Fe-2S] cluster</name>
        <dbReference type="ChEBI" id="CHEBI:190135"/>
    </ligand>
</feature>
<feature type="binding site" evidence="2">
    <location>
        <position position="311"/>
    </location>
    <ligand>
        <name>[2Fe-2S] cluster</name>
        <dbReference type="ChEBI" id="CHEBI:190135"/>
    </ligand>
</feature>
<feature type="binding site" evidence="2">
    <location>
        <position position="341"/>
    </location>
    <ligand>
        <name>[2Fe-2S] cluster</name>
        <dbReference type="ChEBI" id="CHEBI:190135"/>
    </ligand>
</feature>
<gene>
    <name evidence="6" type="primary">stc4</name>
    <name evidence="7" type="ordered locus">RA0401</name>
    <name evidence="10" type="ORF">SMa0752</name>
</gene>